<protein>
    <recommendedName>
        <fullName evidence="1">ATP synthase subunit beta</fullName>
        <ecNumber evidence="1">7.1.2.2</ecNumber>
    </recommendedName>
    <alternativeName>
        <fullName evidence="1">ATP synthase F1 sector subunit beta</fullName>
    </alternativeName>
    <alternativeName>
        <fullName evidence="1">F-ATPase subunit beta</fullName>
    </alternativeName>
</protein>
<comment type="function">
    <text evidence="1">Produces ATP from ADP in the presence of a proton gradient across the membrane. The catalytic sites are hosted primarily by the beta subunits.</text>
</comment>
<comment type="catalytic activity">
    <reaction evidence="1">
        <text>ATP + H2O + 4 H(+)(in) = ADP + phosphate + 5 H(+)(out)</text>
        <dbReference type="Rhea" id="RHEA:57720"/>
        <dbReference type="ChEBI" id="CHEBI:15377"/>
        <dbReference type="ChEBI" id="CHEBI:15378"/>
        <dbReference type="ChEBI" id="CHEBI:30616"/>
        <dbReference type="ChEBI" id="CHEBI:43474"/>
        <dbReference type="ChEBI" id="CHEBI:456216"/>
        <dbReference type="EC" id="7.1.2.2"/>
    </reaction>
</comment>
<comment type="subunit">
    <text evidence="1">F-type ATPases have 2 components, CF(1) - the catalytic core - and CF(0) - the membrane proton channel. CF(1) has five subunits: alpha(3), beta(3), gamma(1), delta(1), epsilon(1). CF(0) has three main subunits: a(1), b(2) and c(9-12). The alpha and beta chains form an alternating ring which encloses part of the gamma chain. CF(1) is attached to CF(0) by a central stalk formed by the gamma and epsilon chains, while a peripheral stalk is formed by the delta and b chains.</text>
</comment>
<comment type="subcellular location">
    <subcellularLocation>
        <location evidence="1">Cell membrane</location>
        <topology evidence="1">Peripheral membrane protein</topology>
    </subcellularLocation>
</comment>
<comment type="similarity">
    <text evidence="1">Belongs to the ATPase alpha/beta chains family.</text>
</comment>
<keyword id="KW-0066">ATP synthesis</keyword>
<keyword id="KW-0067">ATP-binding</keyword>
<keyword id="KW-1003">Cell membrane</keyword>
<keyword id="KW-0139">CF(1)</keyword>
<keyword id="KW-0375">Hydrogen ion transport</keyword>
<keyword id="KW-0406">Ion transport</keyword>
<keyword id="KW-0472">Membrane</keyword>
<keyword id="KW-0547">Nucleotide-binding</keyword>
<keyword id="KW-1278">Translocase</keyword>
<keyword id="KW-0813">Transport</keyword>
<gene>
    <name evidence="1" type="primary">atpD</name>
    <name type="ordered locus">SPP_1527</name>
</gene>
<reference key="1">
    <citation type="journal article" date="2010" name="Genome Biol.">
        <title>Structure and dynamics of the pan-genome of Streptococcus pneumoniae and closely related species.</title>
        <authorList>
            <person name="Donati C."/>
            <person name="Hiller N.L."/>
            <person name="Tettelin H."/>
            <person name="Muzzi A."/>
            <person name="Croucher N.J."/>
            <person name="Angiuoli S.V."/>
            <person name="Oggioni M."/>
            <person name="Dunning Hotopp J.C."/>
            <person name="Hu F.Z."/>
            <person name="Riley D.R."/>
            <person name="Covacci A."/>
            <person name="Mitchell T.J."/>
            <person name="Bentley S.D."/>
            <person name="Kilian M."/>
            <person name="Ehrlich G.D."/>
            <person name="Rappuoli R."/>
            <person name="Moxon E.R."/>
            <person name="Masignani V."/>
        </authorList>
    </citation>
    <scope>NUCLEOTIDE SEQUENCE [LARGE SCALE GENOMIC DNA]</scope>
    <source>
        <strain>P1031</strain>
    </source>
</reference>
<feature type="chain" id="PRO_1000166609" description="ATP synthase subunit beta">
    <location>
        <begin position="1"/>
        <end position="468"/>
    </location>
</feature>
<feature type="binding site" evidence="1">
    <location>
        <begin position="155"/>
        <end position="162"/>
    </location>
    <ligand>
        <name>ATP</name>
        <dbReference type="ChEBI" id="CHEBI:30616"/>
    </ligand>
</feature>
<accession>C1CLK6</accession>
<organism>
    <name type="scientific">Streptococcus pneumoniae (strain P1031)</name>
    <dbReference type="NCBI Taxonomy" id="488223"/>
    <lineage>
        <taxon>Bacteria</taxon>
        <taxon>Bacillati</taxon>
        <taxon>Bacillota</taxon>
        <taxon>Bacilli</taxon>
        <taxon>Lactobacillales</taxon>
        <taxon>Streptococcaceae</taxon>
        <taxon>Streptococcus</taxon>
    </lineage>
</organism>
<sequence length="468" mass="50934">MSSGKIAQVIGPVVDVLFAAGEKLPEINNALVVYKNDERKTKIVLEVALELGDGMVRTIAMESTDGLTRGMEVLDTGRPISVPVGKETLGRVFNVLGDTIDLEAPFTEDAERQPIHKKAPTFDELSTSSEILETGIKVIDLLAPYLKGGKVGLFGGAGVGKTVLIQELIHNIAQEHGGISVFTGVGERTREGNDLYWEMKESGVIEKTAMVFGQMNEPPGARMRVALTGLTIAEYFRDVEGQDVLLFIDNIFRFTQAGSEVSALLGRMPSAVGYQPTLATEMGQLQERITSTKKGSVTSIQAIYVPADDYTDPAPATAFAHLDSTTNLERKLVQLGIYPAVDPLASSSRALAPEIVGEEHYAVAAEVKRVLQRYHELQDIIAILGMDELSDEEKTLVARARRIQFFLSQNFNVAEQFTGQPGSYVPVAETVRGFKEILDGKYDHLPEDAFRGVGSIEDVIAKAEKMGF</sequence>
<name>ATPB_STRZP</name>
<evidence type="ECO:0000255" key="1">
    <source>
        <dbReference type="HAMAP-Rule" id="MF_01347"/>
    </source>
</evidence>
<proteinExistence type="inferred from homology"/>
<dbReference type="EC" id="7.1.2.2" evidence="1"/>
<dbReference type="EMBL" id="CP000920">
    <property type="protein sequence ID" value="ACO21068.1"/>
    <property type="molecule type" value="Genomic_DNA"/>
</dbReference>
<dbReference type="RefSeq" id="WP_000094360.1">
    <property type="nucleotide sequence ID" value="NC_012467.1"/>
</dbReference>
<dbReference type="SMR" id="C1CLK6"/>
<dbReference type="GeneID" id="45653253"/>
<dbReference type="KEGG" id="spp:SPP_1527"/>
<dbReference type="HOGENOM" id="CLU_022398_0_2_9"/>
<dbReference type="GO" id="GO:0005886">
    <property type="term" value="C:plasma membrane"/>
    <property type="evidence" value="ECO:0007669"/>
    <property type="project" value="UniProtKB-SubCell"/>
</dbReference>
<dbReference type="GO" id="GO:0045259">
    <property type="term" value="C:proton-transporting ATP synthase complex"/>
    <property type="evidence" value="ECO:0007669"/>
    <property type="project" value="UniProtKB-KW"/>
</dbReference>
<dbReference type="GO" id="GO:0005524">
    <property type="term" value="F:ATP binding"/>
    <property type="evidence" value="ECO:0007669"/>
    <property type="project" value="UniProtKB-UniRule"/>
</dbReference>
<dbReference type="GO" id="GO:0016887">
    <property type="term" value="F:ATP hydrolysis activity"/>
    <property type="evidence" value="ECO:0007669"/>
    <property type="project" value="InterPro"/>
</dbReference>
<dbReference type="GO" id="GO:0046933">
    <property type="term" value="F:proton-transporting ATP synthase activity, rotational mechanism"/>
    <property type="evidence" value="ECO:0007669"/>
    <property type="project" value="UniProtKB-UniRule"/>
</dbReference>
<dbReference type="CDD" id="cd18110">
    <property type="entry name" value="ATP-synt_F1_beta_C"/>
    <property type="match status" value="1"/>
</dbReference>
<dbReference type="CDD" id="cd18115">
    <property type="entry name" value="ATP-synt_F1_beta_N"/>
    <property type="match status" value="1"/>
</dbReference>
<dbReference type="CDD" id="cd01133">
    <property type="entry name" value="F1-ATPase_beta_CD"/>
    <property type="match status" value="1"/>
</dbReference>
<dbReference type="FunFam" id="1.10.1140.10:FF:000001">
    <property type="entry name" value="ATP synthase subunit beta"/>
    <property type="match status" value="1"/>
</dbReference>
<dbReference type="FunFam" id="2.40.10.170:FF:000005">
    <property type="entry name" value="ATP synthase subunit beta"/>
    <property type="match status" value="1"/>
</dbReference>
<dbReference type="FunFam" id="3.40.50.300:FF:000004">
    <property type="entry name" value="ATP synthase subunit beta"/>
    <property type="match status" value="1"/>
</dbReference>
<dbReference type="Gene3D" id="2.40.10.170">
    <property type="match status" value="1"/>
</dbReference>
<dbReference type="Gene3D" id="1.10.1140.10">
    <property type="entry name" value="Bovine Mitochondrial F1-atpase, Atp Synthase Beta Chain, Chain D, domain 3"/>
    <property type="match status" value="1"/>
</dbReference>
<dbReference type="Gene3D" id="3.40.50.300">
    <property type="entry name" value="P-loop containing nucleotide triphosphate hydrolases"/>
    <property type="match status" value="1"/>
</dbReference>
<dbReference type="HAMAP" id="MF_01347">
    <property type="entry name" value="ATP_synth_beta_bact"/>
    <property type="match status" value="1"/>
</dbReference>
<dbReference type="InterPro" id="IPR003593">
    <property type="entry name" value="AAA+_ATPase"/>
</dbReference>
<dbReference type="InterPro" id="IPR055190">
    <property type="entry name" value="ATP-synt_VA_C"/>
</dbReference>
<dbReference type="InterPro" id="IPR005722">
    <property type="entry name" value="ATP_synth_F1_bsu"/>
</dbReference>
<dbReference type="InterPro" id="IPR020003">
    <property type="entry name" value="ATPase_a/bsu_AS"/>
</dbReference>
<dbReference type="InterPro" id="IPR050053">
    <property type="entry name" value="ATPase_alpha/beta_chains"/>
</dbReference>
<dbReference type="InterPro" id="IPR004100">
    <property type="entry name" value="ATPase_F1/V1/A1_a/bsu_N"/>
</dbReference>
<dbReference type="InterPro" id="IPR036121">
    <property type="entry name" value="ATPase_F1/V1/A1_a/bsu_N_sf"/>
</dbReference>
<dbReference type="InterPro" id="IPR000194">
    <property type="entry name" value="ATPase_F1/V1/A1_a/bsu_nucl-bd"/>
</dbReference>
<dbReference type="InterPro" id="IPR024034">
    <property type="entry name" value="ATPase_F1/V1_b/a_C"/>
</dbReference>
<dbReference type="InterPro" id="IPR027417">
    <property type="entry name" value="P-loop_NTPase"/>
</dbReference>
<dbReference type="NCBIfam" id="TIGR01039">
    <property type="entry name" value="atpD"/>
    <property type="match status" value="1"/>
</dbReference>
<dbReference type="PANTHER" id="PTHR15184">
    <property type="entry name" value="ATP SYNTHASE"/>
    <property type="match status" value="1"/>
</dbReference>
<dbReference type="PANTHER" id="PTHR15184:SF71">
    <property type="entry name" value="ATP SYNTHASE SUBUNIT BETA, MITOCHONDRIAL"/>
    <property type="match status" value="1"/>
</dbReference>
<dbReference type="Pfam" id="PF00006">
    <property type="entry name" value="ATP-synt_ab"/>
    <property type="match status" value="1"/>
</dbReference>
<dbReference type="Pfam" id="PF02874">
    <property type="entry name" value="ATP-synt_ab_N"/>
    <property type="match status" value="1"/>
</dbReference>
<dbReference type="Pfam" id="PF22919">
    <property type="entry name" value="ATP-synt_VA_C"/>
    <property type="match status" value="1"/>
</dbReference>
<dbReference type="SMART" id="SM00382">
    <property type="entry name" value="AAA"/>
    <property type="match status" value="1"/>
</dbReference>
<dbReference type="SUPFAM" id="SSF47917">
    <property type="entry name" value="C-terminal domain of alpha and beta subunits of F1 ATP synthase"/>
    <property type="match status" value="1"/>
</dbReference>
<dbReference type="SUPFAM" id="SSF50615">
    <property type="entry name" value="N-terminal domain of alpha and beta subunits of F1 ATP synthase"/>
    <property type="match status" value="1"/>
</dbReference>
<dbReference type="SUPFAM" id="SSF52540">
    <property type="entry name" value="P-loop containing nucleoside triphosphate hydrolases"/>
    <property type="match status" value="1"/>
</dbReference>
<dbReference type="PROSITE" id="PS00152">
    <property type="entry name" value="ATPASE_ALPHA_BETA"/>
    <property type="match status" value="1"/>
</dbReference>